<proteinExistence type="inferred from homology"/>
<reference key="1">
    <citation type="journal article" date="2010" name="Genome Biol.">
        <title>Structure and dynamics of the pan-genome of Streptococcus pneumoniae and closely related species.</title>
        <authorList>
            <person name="Donati C."/>
            <person name="Hiller N.L."/>
            <person name="Tettelin H."/>
            <person name="Muzzi A."/>
            <person name="Croucher N.J."/>
            <person name="Angiuoli S.V."/>
            <person name="Oggioni M."/>
            <person name="Dunning Hotopp J.C."/>
            <person name="Hu F.Z."/>
            <person name="Riley D.R."/>
            <person name="Covacci A."/>
            <person name="Mitchell T.J."/>
            <person name="Bentley S.D."/>
            <person name="Kilian M."/>
            <person name="Ehrlich G.D."/>
            <person name="Rappuoli R."/>
            <person name="Moxon E.R."/>
            <person name="Masignani V."/>
        </authorList>
    </citation>
    <scope>NUCLEOTIDE SEQUENCE [LARGE SCALE GENOMIC DNA]</scope>
    <source>
        <strain>Taiwan19F-14</strain>
    </source>
</reference>
<dbReference type="EC" id="3.1.11.6" evidence="1"/>
<dbReference type="EMBL" id="CP000921">
    <property type="protein sequence ID" value="ACO23552.1"/>
    <property type="molecule type" value="Genomic_DNA"/>
</dbReference>
<dbReference type="RefSeq" id="WP_000417447.1">
    <property type="nucleotide sequence ID" value="NC_012469.1"/>
</dbReference>
<dbReference type="SMR" id="C1CR91"/>
<dbReference type="KEGG" id="snt:SPT_1019"/>
<dbReference type="HOGENOM" id="CLU_023625_3_1_9"/>
<dbReference type="GO" id="GO:0005737">
    <property type="term" value="C:cytoplasm"/>
    <property type="evidence" value="ECO:0007669"/>
    <property type="project" value="UniProtKB-SubCell"/>
</dbReference>
<dbReference type="GO" id="GO:0009318">
    <property type="term" value="C:exodeoxyribonuclease VII complex"/>
    <property type="evidence" value="ECO:0007669"/>
    <property type="project" value="InterPro"/>
</dbReference>
<dbReference type="GO" id="GO:0008855">
    <property type="term" value="F:exodeoxyribonuclease VII activity"/>
    <property type="evidence" value="ECO:0007669"/>
    <property type="project" value="UniProtKB-UniRule"/>
</dbReference>
<dbReference type="GO" id="GO:0003676">
    <property type="term" value="F:nucleic acid binding"/>
    <property type="evidence" value="ECO:0007669"/>
    <property type="project" value="InterPro"/>
</dbReference>
<dbReference type="GO" id="GO:0006308">
    <property type="term" value="P:DNA catabolic process"/>
    <property type="evidence" value="ECO:0007669"/>
    <property type="project" value="UniProtKB-UniRule"/>
</dbReference>
<dbReference type="CDD" id="cd04489">
    <property type="entry name" value="ExoVII_LU_OBF"/>
    <property type="match status" value="1"/>
</dbReference>
<dbReference type="HAMAP" id="MF_00378">
    <property type="entry name" value="Exonuc_7_L"/>
    <property type="match status" value="1"/>
</dbReference>
<dbReference type="InterPro" id="IPR003753">
    <property type="entry name" value="Exonuc_VII_L"/>
</dbReference>
<dbReference type="InterPro" id="IPR020579">
    <property type="entry name" value="Exonuc_VII_lsu_C"/>
</dbReference>
<dbReference type="InterPro" id="IPR025824">
    <property type="entry name" value="OB-fold_nuc-bd_dom"/>
</dbReference>
<dbReference type="NCBIfam" id="TIGR00237">
    <property type="entry name" value="xseA"/>
    <property type="match status" value="1"/>
</dbReference>
<dbReference type="PANTHER" id="PTHR30008">
    <property type="entry name" value="EXODEOXYRIBONUCLEASE 7 LARGE SUBUNIT"/>
    <property type="match status" value="1"/>
</dbReference>
<dbReference type="PANTHER" id="PTHR30008:SF0">
    <property type="entry name" value="EXODEOXYRIBONUCLEASE 7 LARGE SUBUNIT"/>
    <property type="match status" value="1"/>
</dbReference>
<dbReference type="Pfam" id="PF02601">
    <property type="entry name" value="Exonuc_VII_L"/>
    <property type="match status" value="1"/>
</dbReference>
<dbReference type="Pfam" id="PF13742">
    <property type="entry name" value="tRNA_anti_2"/>
    <property type="match status" value="1"/>
</dbReference>
<comment type="function">
    <text evidence="1">Bidirectionally degrades single-stranded DNA into large acid-insoluble oligonucleotides, which are then degraded further into small acid-soluble oligonucleotides.</text>
</comment>
<comment type="catalytic activity">
    <reaction evidence="1">
        <text>Exonucleolytic cleavage in either 5'- to 3'- or 3'- to 5'-direction to yield nucleoside 5'-phosphates.</text>
        <dbReference type="EC" id="3.1.11.6"/>
    </reaction>
</comment>
<comment type="subunit">
    <text evidence="1">Heterooligomer composed of large and small subunits.</text>
</comment>
<comment type="subcellular location">
    <subcellularLocation>
        <location evidence="1">Cytoplasm</location>
    </subcellularLocation>
</comment>
<comment type="similarity">
    <text evidence="1">Belongs to the XseA family.</text>
</comment>
<keyword id="KW-0963">Cytoplasm</keyword>
<keyword id="KW-0269">Exonuclease</keyword>
<keyword id="KW-0378">Hydrolase</keyword>
<keyword id="KW-0540">Nuclease</keyword>
<name>EX7L_STRZT</name>
<evidence type="ECO:0000255" key="1">
    <source>
        <dbReference type="HAMAP-Rule" id="MF_00378"/>
    </source>
</evidence>
<feature type="chain" id="PRO_1000200685" description="Exodeoxyribonuclease 7 large subunit">
    <location>
        <begin position="1"/>
        <end position="446"/>
    </location>
</feature>
<protein>
    <recommendedName>
        <fullName evidence="1">Exodeoxyribonuclease 7 large subunit</fullName>
        <ecNumber evidence="1">3.1.11.6</ecNumber>
    </recommendedName>
    <alternativeName>
        <fullName evidence="1">Exodeoxyribonuclease VII large subunit</fullName>
        <shortName evidence="1">Exonuclease VII large subunit</shortName>
    </alternativeName>
</protein>
<gene>
    <name evidence="1" type="primary">xseA</name>
    <name type="ordered locus">SPT_1019</name>
</gene>
<sequence length="446" mass="50535">MEKYLSVTTLTKYLKMKFDKDPYLERVYLTGQVSNFRKRPTHQYFSLKDDHAVIQATIWSGIYQKLGFDLEEGMKINVIGRVQVYEPSGNYSIIIEKAEPDGVGALAIQFEQLKKKLTEEGLFQERFKQALPQFSKRIGVVTSRSGAVIRDIITTVSRRFPGVDILLYPTKVQGEGAAEEIARNIARANQRDDLDLLIIGRGGGSIEDLWAFNEEIVVRAIFESRLPVISSVGHETDVTLADFVADRRAATPTAAAELATPVTKLDVLAHLQNQEKRMVTAVRNVLSKKQEALKKCSQSVIFRQPERLYDGYLQRLDQLQLRLKQSLRTRISDNKQLVQARTHQLVQLSPVTKIQRYQDRLGQLDKLLGSQMALVYDAKVAEAKRLSEALLMLDTSRIVARGYAIVKKEESVVDSVESLKKKDQVTLLMRDGQVELEVKDVKTKEI</sequence>
<organism>
    <name type="scientific">Streptococcus pneumoniae (strain Taiwan19F-14)</name>
    <dbReference type="NCBI Taxonomy" id="487213"/>
    <lineage>
        <taxon>Bacteria</taxon>
        <taxon>Bacillati</taxon>
        <taxon>Bacillota</taxon>
        <taxon>Bacilli</taxon>
        <taxon>Lactobacillales</taxon>
        <taxon>Streptococcaceae</taxon>
        <taxon>Streptococcus</taxon>
    </lineage>
</organism>
<accession>C1CR91</accession>